<keyword id="KW-0067">ATP-binding</keyword>
<keyword id="KW-0963">Cytoplasm</keyword>
<keyword id="KW-0436">Ligase</keyword>
<keyword id="KW-0547">Nucleotide-binding</keyword>
<keyword id="KW-1185">Reference proteome</keyword>
<name>GLNA4_MAIZE</name>
<proteinExistence type="evidence at transcript level"/>
<gene>
    <name type="primary">GLN5</name>
    <name type="synonym">GS1-4</name>
</gene>
<dbReference type="EC" id="6.3.1.2"/>
<dbReference type="EMBL" id="X65929">
    <property type="protein sequence ID" value="CAA46722.1"/>
    <property type="molecule type" value="mRNA"/>
</dbReference>
<dbReference type="EMBL" id="D14576">
    <property type="protein sequence ID" value="BAA03430.1"/>
    <property type="molecule type" value="mRNA"/>
</dbReference>
<dbReference type="PIR" id="S39480">
    <property type="entry name" value="S39480"/>
</dbReference>
<dbReference type="SMR" id="P38562"/>
<dbReference type="FunCoup" id="P38562">
    <property type="interactions" value="2538"/>
</dbReference>
<dbReference type="STRING" id="4577.P38562"/>
<dbReference type="MaizeGDB" id="17151"/>
<dbReference type="InParanoid" id="P38562"/>
<dbReference type="BRENDA" id="6.3.1.2">
    <property type="organism ID" value="6752"/>
</dbReference>
<dbReference type="SABIO-RK" id="P38562"/>
<dbReference type="Proteomes" id="UP000007305">
    <property type="component" value="Unplaced"/>
</dbReference>
<dbReference type="ExpressionAtlas" id="P38562">
    <property type="expression patterns" value="baseline and differential"/>
</dbReference>
<dbReference type="GO" id="GO:0005737">
    <property type="term" value="C:cytoplasm"/>
    <property type="evidence" value="ECO:0000318"/>
    <property type="project" value="GO_Central"/>
</dbReference>
<dbReference type="GO" id="GO:0005524">
    <property type="term" value="F:ATP binding"/>
    <property type="evidence" value="ECO:0007669"/>
    <property type="project" value="UniProtKB-KW"/>
</dbReference>
<dbReference type="GO" id="GO:0004356">
    <property type="term" value="F:glutamine synthetase activity"/>
    <property type="evidence" value="ECO:0000318"/>
    <property type="project" value="GO_Central"/>
</dbReference>
<dbReference type="GO" id="GO:0006542">
    <property type="term" value="P:glutamine biosynthetic process"/>
    <property type="evidence" value="ECO:0000318"/>
    <property type="project" value="GO_Central"/>
</dbReference>
<dbReference type="FunFam" id="3.30.590.10:FF:000004">
    <property type="entry name" value="Glutamine synthetase"/>
    <property type="match status" value="1"/>
</dbReference>
<dbReference type="FunFam" id="3.10.20.70:FF:000003">
    <property type="entry name" value="Glutamine synthetase, chloroplastic"/>
    <property type="match status" value="1"/>
</dbReference>
<dbReference type="Gene3D" id="3.10.20.70">
    <property type="entry name" value="Glutamine synthetase, N-terminal domain"/>
    <property type="match status" value="1"/>
</dbReference>
<dbReference type="Gene3D" id="3.30.590.10">
    <property type="entry name" value="Glutamine synthetase/guanido kinase, catalytic domain"/>
    <property type="match status" value="1"/>
</dbReference>
<dbReference type="InterPro" id="IPR008147">
    <property type="entry name" value="Gln_synt_N"/>
</dbReference>
<dbReference type="InterPro" id="IPR036651">
    <property type="entry name" value="Gln_synt_N_sf"/>
</dbReference>
<dbReference type="InterPro" id="IPR014746">
    <property type="entry name" value="Gln_synth/guanido_kin_cat_dom"/>
</dbReference>
<dbReference type="InterPro" id="IPR008146">
    <property type="entry name" value="Gln_synth_cat_dom"/>
</dbReference>
<dbReference type="InterPro" id="IPR027303">
    <property type="entry name" value="Gln_synth_gly_rich_site"/>
</dbReference>
<dbReference type="InterPro" id="IPR027302">
    <property type="entry name" value="Gln_synth_N_conserv_site"/>
</dbReference>
<dbReference type="InterPro" id="IPR050292">
    <property type="entry name" value="Glutamine_Synthetase"/>
</dbReference>
<dbReference type="PANTHER" id="PTHR20852">
    <property type="entry name" value="GLUTAMINE SYNTHETASE"/>
    <property type="match status" value="1"/>
</dbReference>
<dbReference type="PANTHER" id="PTHR20852:SF93">
    <property type="entry name" value="GLUTAMINE SYNTHETASE CYTOSOLIC ISOZYME 1-1"/>
    <property type="match status" value="1"/>
</dbReference>
<dbReference type="Pfam" id="PF00120">
    <property type="entry name" value="Gln-synt_C"/>
    <property type="match status" value="1"/>
</dbReference>
<dbReference type="Pfam" id="PF03951">
    <property type="entry name" value="Gln-synt_N"/>
    <property type="match status" value="1"/>
</dbReference>
<dbReference type="SMART" id="SM01230">
    <property type="entry name" value="Gln-synt_C"/>
    <property type="match status" value="1"/>
</dbReference>
<dbReference type="SUPFAM" id="SSF54368">
    <property type="entry name" value="Glutamine synthetase, N-terminal domain"/>
    <property type="match status" value="1"/>
</dbReference>
<dbReference type="SUPFAM" id="SSF55931">
    <property type="entry name" value="Glutamine synthetase/guanido kinase"/>
    <property type="match status" value="1"/>
</dbReference>
<dbReference type="PROSITE" id="PS00180">
    <property type="entry name" value="GLNA_1"/>
    <property type="match status" value="1"/>
</dbReference>
<dbReference type="PROSITE" id="PS00181">
    <property type="entry name" value="GLNA_ATP"/>
    <property type="match status" value="1"/>
</dbReference>
<dbReference type="PROSITE" id="PS51986">
    <property type="entry name" value="GS_BETA_GRASP"/>
    <property type="match status" value="1"/>
</dbReference>
<dbReference type="PROSITE" id="PS51987">
    <property type="entry name" value="GS_CATALYTIC"/>
    <property type="match status" value="1"/>
</dbReference>
<feature type="chain" id="PRO_0000153181" description="Glutamine synthetase root isozyme 4">
    <location>
        <begin position="1"/>
        <end position="355"/>
    </location>
</feature>
<feature type="domain" description="GS beta-grasp" evidence="1">
    <location>
        <begin position="19"/>
        <end position="99"/>
    </location>
</feature>
<feature type="domain" description="GS catalytic" evidence="2">
    <location>
        <begin position="106"/>
        <end position="355"/>
    </location>
</feature>
<feature type="region of interest" description="Disordered" evidence="3">
    <location>
        <begin position="37"/>
        <end position="66"/>
    </location>
</feature>
<feature type="sequence conflict" description="In Ref. 2." evidence="4" ref="2">
    <original>A</original>
    <variation>R</variation>
    <location>
        <position position="316"/>
    </location>
</feature>
<feature type="sequence conflict" description="In Ref. 2." evidence="4" ref="2">
    <original>Q</original>
    <variation>RE</variation>
    <location>
        <position position="319"/>
    </location>
</feature>
<reference key="1">
    <citation type="journal article" date="1993" name="Plant Mol. Biol.">
        <title>Differential expression of six glutamine synthetase genes in Zea mays.</title>
        <authorList>
            <person name="Li M.-G."/>
            <person name="Villemur R."/>
            <person name="Hussey P.J."/>
            <person name="Silflow C.D."/>
            <person name="Gantt J.S."/>
            <person name="Snustad D.P."/>
        </authorList>
    </citation>
    <scope>NUCLEOTIDE SEQUENCE [MRNA]</scope>
    <source>
        <strain>cv. A188</strain>
        <tissue>Seedling</tissue>
    </source>
</reference>
<reference key="2">
    <citation type="journal article" date="1992" name="Plant Cell Physiol.">
        <title>Molecular cloning of the family of glutamine synthetase genes from maize: expression of genes for glutamine synthetase and ferredoxin-dependent glutamate synthase in photosynthetic and non-photosynthetic tissues.</title>
        <authorList>
            <person name="Sakakibara H."/>
            <person name="Kawabata S."/>
            <person name="Takahashi H."/>
            <person name="Hase T."/>
            <person name="Sugiyama T."/>
        </authorList>
    </citation>
    <scope>NUCLEOTIDE SEQUENCE [MRNA]</scope>
    <source>
        <strain>cv. Golden cross Bantam T51</strain>
        <tissue>Leaf</tissue>
    </source>
</reference>
<evidence type="ECO:0000255" key="1">
    <source>
        <dbReference type="PROSITE-ProRule" id="PRU01330"/>
    </source>
</evidence>
<evidence type="ECO:0000255" key="2">
    <source>
        <dbReference type="PROSITE-ProRule" id="PRU01331"/>
    </source>
</evidence>
<evidence type="ECO:0000256" key="3">
    <source>
        <dbReference type="SAM" id="MobiDB-lite"/>
    </source>
</evidence>
<evidence type="ECO:0000305" key="4"/>
<accession>P38562</accession>
<organism>
    <name type="scientific">Zea mays</name>
    <name type="common">Maize</name>
    <dbReference type="NCBI Taxonomy" id="4577"/>
    <lineage>
        <taxon>Eukaryota</taxon>
        <taxon>Viridiplantae</taxon>
        <taxon>Streptophyta</taxon>
        <taxon>Embryophyta</taxon>
        <taxon>Tracheophyta</taxon>
        <taxon>Spermatophyta</taxon>
        <taxon>Magnoliopsida</taxon>
        <taxon>Liliopsida</taxon>
        <taxon>Poales</taxon>
        <taxon>Poaceae</taxon>
        <taxon>PACMAD clade</taxon>
        <taxon>Panicoideae</taxon>
        <taxon>Andropogonodae</taxon>
        <taxon>Andropogoneae</taxon>
        <taxon>Tripsacinae</taxon>
        <taxon>Zea</taxon>
    </lineage>
</organism>
<sequence length="355" mass="38981">MACLTDLVNLNLSDTTEKIIAEYIWIGGSGMDLRSKARTLPGPVTDPSKLPKWNYDGSSTGQAPGEDSEVILYPQAIFKDPFRRGNNILVMCDCYTPAGEPIPTNKRYSAAKIFSSPEVAAEEPWYGIEQEYTLLQKDTNWPLGWPIGGFPGPQGPYYCGIGAEKSFGRDIVDAHYKACLYAGINISGINGEVMPGQWEFQVGPSVGISSGDQVWVARYILERITEIAGVVVTFDPKPIPGDWNGAGAHTNYSTESMRKEGGYEVIKAAIEKLKLRHKEHIAAYGEGNERRLTGRHETADINTFSWGVANRGASVAVGQTEQNGKGYFEDRRPASNMDPYVVTSMIAETTIVWKP</sequence>
<comment type="function">
    <text>Plays a role in the flow of nitrogen into nitrogenous organic compounds.</text>
</comment>
<comment type="catalytic activity">
    <reaction>
        <text>L-glutamate + NH4(+) + ATP = L-glutamine + ADP + phosphate + H(+)</text>
        <dbReference type="Rhea" id="RHEA:16169"/>
        <dbReference type="ChEBI" id="CHEBI:15378"/>
        <dbReference type="ChEBI" id="CHEBI:28938"/>
        <dbReference type="ChEBI" id="CHEBI:29985"/>
        <dbReference type="ChEBI" id="CHEBI:30616"/>
        <dbReference type="ChEBI" id="CHEBI:43474"/>
        <dbReference type="ChEBI" id="CHEBI:58359"/>
        <dbReference type="ChEBI" id="CHEBI:456216"/>
        <dbReference type="EC" id="6.3.1.2"/>
    </reaction>
</comment>
<comment type="subunit">
    <text>Homooctamer.</text>
</comment>
<comment type="subcellular location">
    <subcellularLocation>
        <location>Cytoplasm</location>
    </subcellularLocation>
</comment>
<comment type="tissue specificity">
    <text>Found in all the tissues examined with higher expression found in tissues of the root, stem and seedling shoot.</text>
</comment>
<comment type="similarity">
    <text evidence="4">Belongs to the glutamine synthetase family.</text>
</comment>
<protein>
    <recommendedName>
        <fullName>Glutamine synthetase root isozyme 4</fullName>
        <ecNumber>6.3.1.2</ecNumber>
    </recommendedName>
    <alternativeName>
        <fullName>GS107</fullName>
    </alternativeName>
    <alternativeName>
        <fullName>Glutamate--ammonia ligase</fullName>
    </alternativeName>
</protein>